<gene>
    <name evidence="1" type="primary">ispE</name>
    <name type="ordered locus">ECUMN_1505</name>
</gene>
<organism>
    <name type="scientific">Escherichia coli O17:K52:H18 (strain UMN026 / ExPEC)</name>
    <dbReference type="NCBI Taxonomy" id="585056"/>
    <lineage>
        <taxon>Bacteria</taxon>
        <taxon>Pseudomonadati</taxon>
        <taxon>Pseudomonadota</taxon>
        <taxon>Gammaproteobacteria</taxon>
        <taxon>Enterobacterales</taxon>
        <taxon>Enterobacteriaceae</taxon>
        <taxon>Escherichia</taxon>
    </lineage>
</organism>
<reference key="1">
    <citation type="journal article" date="2009" name="PLoS Genet.">
        <title>Organised genome dynamics in the Escherichia coli species results in highly diverse adaptive paths.</title>
        <authorList>
            <person name="Touchon M."/>
            <person name="Hoede C."/>
            <person name="Tenaillon O."/>
            <person name="Barbe V."/>
            <person name="Baeriswyl S."/>
            <person name="Bidet P."/>
            <person name="Bingen E."/>
            <person name="Bonacorsi S."/>
            <person name="Bouchier C."/>
            <person name="Bouvet O."/>
            <person name="Calteau A."/>
            <person name="Chiapello H."/>
            <person name="Clermont O."/>
            <person name="Cruveiller S."/>
            <person name="Danchin A."/>
            <person name="Diard M."/>
            <person name="Dossat C."/>
            <person name="Karoui M.E."/>
            <person name="Frapy E."/>
            <person name="Garry L."/>
            <person name="Ghigo J.M."/>
            <person name="Gilles A.M."/>
            <person name="Johnson J."/>
            <person name="Le Bouguenec C."/>
            <person name="Lescat M."/>
            <person name="Mangenot S."/>
            <person name="Martinez-Jehanne V."/>
            <person name="Matic I."/>
            <person name="Nassif X."/>
            <person name="Oztas S."/>
            <person name="Petit M.A."/>
            <person name="Pichon C."/>
            <person name="Rouy Z."/>
            <person name="Ruf C.S."/>
            <person name="Schneider D."/>
            <person name="Tourret J."/>
            <person name="Vacherie B."/>
            <person name="Vallenet D."/>
            <person name="Medigue C."/>
            <person name="Rocha E.P.C."/>
            <person name="Denamur E."/>
        </authorList>
    </citation>
    <scope>NUCLEOTIDE SEQUENCE [LARGE SCALE GENOMIC DNA]</scope>
    <source>
        <strain>UMN026 / ExPEC</strain>
    </source>
</reference>
<accession>B7N419</accession>
<protein>
    <recommendedName>
        <fullName evidence="1">4-diphosphocytidyl-2-C-methyl-D-erythritol kinase</fullName>
        <shortName evidence="1">CMK</shortName>
        <ecNumber evidence="1">2.7.1.148</ecNumber>
    </recommendedName>
    <alternativeName>
        <fullName evidence="1">4-(cytidine-5'-diphospho)-2-C-methyl-D-erythritol kinase</fullName>
    </alternativeName>
</protein>
<name>ISPE_ECOLU</name>
<comment type="function">
    <text evidence="1">Catalyzes the phosphorylation of the position 2 hydroxy group of 4-diphosphocytidyl-2C-methyl-D-erythritol.</text>
</comment>
<comment type="catalytic activity">
    <reaction evidence="1">
        <text>4-CDP-2-C-methyl-D-erythritol + ATP = 4-CDP-2-C-methyl-D-erythritol 2-phosphate + ADP + H(+)</text>
        <dbReference type="Rhea" id="RHEA:18437"/>
        <dbReference type="ChEBI" id="CHEBI:15378"/>
        <dbReference type="ChEBI" id="CHEBI:30616"/>
        <dbReference type="ChEBI" id="CHEBI:57823"/>
        <dbReference type="ChEBI" id="CHEBI:57919"/>
        <dbReference type="ChEBI" id="CHEBI:456216"/>
        <dbReference type="EC" id="2.7.1.148"/>
    </reaction>
</comment>
<comment type="pathway">
    <text evidence="1">Isoprenoid biosynthesis; isopentenyl diphosphate biosynthesis via DXP pathway; isopentenyl diphosphate from 1-deoxy-D-xylulose 5-phosphate: step 3/6.</text>
</comment>
<comment type="subunit">
    <text evidence="1">Homodimer.</text>
</comment>
<comment type="similarity">
    <text evidence="1">Belongs to the GHMP kinase family. IspE subfamily.</text>
</comment>
<sequence>MRTQWPSPAKLNLFLYITGQRADGYHTLQTLFQFLDYGDTISIELRDDGDIRLLTPVEGVEHEDNLIVRAARLLMKTAADSGRLPTGSGADISIDKRLPMGGGLGGGSSNAATVLVALNHLWQCGLSMDELAEMGLTLGADVPVFVRGHAAFAEGVGEILTPVDPPEKWYLVAHPGVSIPTPVIFKDPELPRNTPKRSIETLLKCEFSNDCEVIARKRFREVDAVLSWLLEYAPSRLTGTGACVFAEFDTESEARQVLEQAPEWLNGFVAKGVNLSPLHRAML</sequence>
<evidence type="ECO:0000255" key="1">
    <source>
        <dbReference type="HAMAP-Rule" id="MF_00061"/>
    </source>
</evidence>
<feature type="chain" id="PRO_1000116929" description="4-diphosphocytidyl-2-C-methyl-D-erythritol kinase">
    <location>
        <begin position="1"/>
        <end position="283"/>
    </location>
</feature>
<feature type="active site" evidence="1">
    <location>
        <position position="10"/>
    </location>
</feature>
<feature type="active site" evidence="1">
    <location>
        <position position="141"/>
    </location>
</feature>
<feature type="binding site" evidence="1">
    <location>
        <begin position="99"/>
        <end position="109"/>
    </location>
    <ligand>
        <name>ATP</name>
        <dbReference type="ChEBI" id="CHEBI:30616"/>
    </ligand>
</feature>
<dbReference type="EC" id="2.7.1.148" evidence="1"/>
<dbReference type="EMBL" id="CU928163">
    <property type="protein sequence ID" value="CAR12712.1"/>
    <property type="molecule type" value="Genomic_DNA"/>
</dbReference>
<dbReference type="RefSeq" id="WP_001260323.1">
    <property type="nucleotide sequence ID" value="NC_011751.1"/>
</dbReference>
<dbReference type="RefSeq" id="YP_002412249.1">
    <property type="nucleotide sequence ID" value="NC_011751.1"/>
</dbReference>
<dbReference type="SMR" id="B7N419"/>
<dbReference type="STRING" id="585056.ECUMN_1505"/>
<dbReference type="KEGG" id="eum:ECUMN_1505"/>
<dbReference type="PATRIC" id="fig|585056.7.peg.1703"/>
<dbReference type="HOGENOM" id="CLU_053057_3_0_6"/>
<dbReference type="UniPathway" id="UPA00056">
    <property type="reaction ID" value="UER00094"/>
</dbReference>
<dbReference type="Proteomes" id="UP000007097">
    <property type="component" value="Chromosome"/>
</dbReference>
<dbReference type="GO" id="GO:0050515">
    <property type="term" value="F:4-(cytidine 5'-diphospho)-2-C-methyl-D-erythritol kinase activity"/>
    <property type="evidence" value="ECO:0007669"/>
    <property type="project" value="UniProtKB-UniRule"/>
</dbReference>
<dbReference type="GO" id="GO:0005524">
    <property type="term" value="F:ATP binding"/>
    <property type="evidence" value="ECO:0007669"/>
    <property type="project" value="UniProtKB-UniRule"/>
</dbReference>
<dbReference type="GO" id="GO:0019288">
    <property type="term" value="P:isopentenyl diphosphate biosynthetic process, methylerythritol 4-phosphate pathway"/>
    <property type="evidence" value="ECO:0007669"/>
    <property type="project" value="UniProtKB-UniRule"/>
</dbReference>
<dbReference type="GO" id="GO:0016114">
    <property type="term" value="P:terpenoid biosynthetic process"/>
    <property type="evidence" value="ECO:0007669"/>
    <property type="project" value="InterPro"/>
</dbReference>
<dbReference type="FunFam" id="3.30.230.10:FF:000022">
    <property type="entry name" value="4-diphosphocytidyl-2-C-methyl-D-erythritol kinase"/>
    <property type="match status" value="1"/>
</dbReference>
<dbReference type="FunFam" id="3.30.70.890:FF:000004">
    <property type="entry name" value="4-diphosphocytidyl-2-C-methyl-D-erythritol kinase"/>
    <property type="match status" value="1"/>
</dbReference>
<dbReference type="Gene3D" id="3.30.230.10">
    <property type="match status" value="1"/>
</dbReference>
<dbReference type="Gene3D" id="3.30.70.890">
    <property type="entry name" value="GHMP kinase, C-terminal domain"/>
    <property type="match status" value="1"/>
</dbReference>
<dbReference type="HAMAP" id="MF_00061">
    <property type="entry name" value="IspE"/>
    <property type="match status" value="1"/>
</dbReference>
<dbReference type="InterPro" id="IPR013750">
    <property type="entry name" value="GHMP_kinase_C_dom"/>
</dbReference>
<dbReference type="InterPro" id="IPR036554">
    <property type="entry name" value="GHMP_kinase_C_sf"/>
</dbReference>
<dbReference type="InterPro" id="IPR006204">
    <property type="entry name" value="GHMP_kinase_N_dom"/>
</dbReference>
<dbReference type="InterPro" id="IPR004424">
    <property type="entry name" value="IspE"/>
</dbReference>
<dbReference type="InterPro" id="IPR020568">
    <property type="entry name" value="Ribosomal_Su5_D2-typ_SF"/>
</dbReference>
<dbReference type="InterPro" id="IPR014721">
    <property type="entry name" value="Ribsml_uS5_D2-typ_fold_subgr"/>
</dbReference>
<dbReference type="NCBIfam" id="TIGR00154">
    <property type="entry name" value="ispE"/>
    <property type="match status" value="1"/>
</dbReference>
<dbReference type="PANTHER" id="PTHR43527">
    <property type="entry name" value="4-DIPHOSPHOCYTIDYL-2-C-METHYL-D-ERYTHRITOL KINASE, CHLOROPLASTIC"/>
    <property type="match status" value="1"/>
</dbReference>
<dbReference type="PANTHER" id="PTHR43527:SF2">
    <property type="entry name" value="4-DIPHOSPHOCYTIDYL-2-C-METHYL-D-ERYTHRITOL KINASE, CHLOROPLASTIC"/>
    <property type="match status" value="1"/>
</dbReference>
<dbReference type="Pfam" id="PF08544">
    <property type="entry name" value="GHMP_kinases_C"/>
    <property type="match status" value="1"/>
</dbReference>
<dbReference type="Pfam" id="PF00288">
    <property type="entry name" value="GHMP_kinases_N"/>
    <property type="match status" value="1"/>
</dbReference>
<dbReference type="PIRSF" id="PIRSF010376">
    <property type="entry name" value="IspE"/>
    <property type="match status" value="1"/>
</dbReference>
<dbReference type="SUPFAM" id="SSF55060">
    <property type="entry name" value="GHMP Kinase, C-terminal domain"/>
    <property type="match status" value="1"/>
</dbReference>
<dbReference type="SUPFAM" id="SSF54211">
    <property type="entry name" value="Ribosomal protein S5 domain 2-like"/>
    <property type="match status" value="1"/>
</dbReference>
<proteinExistence type="inferred from homology"/>
<keyword id="KW-0067">ATP-binding</keyword>
<keyword id="KW-0414">Isoprene biosynthesis</keyword>
<keyword id="KW-0418">Kinase</keyword>
<keyword id="KW-0547">Nucleotide-binding</keyword>
<keyword id="KW-0808">Transferase</keyword>